<organism>
    <name type="scientific">Cytophaga hutchinsonii (strain ATCC 33406 / DSM 1761 / CIP 103989 / NBRC 15051 / NCIMB 9469 / D465)</name>
    <dbReference type="NCBI Taxonomy" id="269798"/>
    <lineage>
        <taxon>Bacteria</taxon>
        <taxon>Pseudomonadati</taxon>
        <taxon>Bacteroidota</taxon>
        <taxon>Cytophagia</taxon>
        <taxon>Cytophagales</taxon>
        <taxon>Cytophagaceae</taxon>
        <taxon>Cytophaga</taxon>
    </lineage>
</organism>
<reference key="1">
    <citation type="journal article" date="2007" name="Appl. Environ. Microbiol.">
        <title>Genome sequence of the cellulolytic gliding bacterium Cytophaga hutchinsonii.</title>
        <authorList>
            <person name="Xie G."/>
            <person name="Bruce D.C."/>
            <person name="Challacombe J.F."/>
            <person name="Chertkov O."/>
            <person name="Detter J.C."/>
            <person name="Gilna P."/>
            <person name="Han C.S."/>
            <person name="Lucas S."/>
            <person name="Misra M."/>
            <person name="Myers G.L."/>
            <person name="Richardson P."/>
            <person name="Tapia R."/>
            <person name="Thayer N."/>
            <person name="Thompson L.S."/>
            <person name="Brettin T.S."/>
            <person name="Henrissat B."/>
            <person name="Wilson D.B."/>
            <person name="McBride M.J."/>
        </authorList>
    </citation>
    <scope>NUCLEOTIDE SEQUENCE [LARGE SCALE GENOMIC DNA]</scope>
    <source>
        <strain>ATCC 33406 / DSM 1761 / JCM 20678 / CIP 103989 / IAM 12607 / NBRC 15051 / NCIMB 9469 / D465</strain>
    </source>
</reference>
<proteinExistence type="inferred from homology"/>
<protein>
    <recommendedName>
        <fullName evidence="1">NADH-quinone oxidoreductase subunit K</fullName>
        <ecNumber evidence="1">7.1.1.-</ecNumber>
    </recommendedName>
    <alternativeName>
        <fullName evidence="1">NADH dehydrogenase I subunit K</fullName>
    </alternativeName>
    <alternativeName>
        <fullName evidence="1">NDH-1 subunit K</fullName>
    </alternativeName>
</protein>
<feature type="chain" id="PRO_0000390024" description="NADH-quinone oxidoreductase subunit K">
    <location>
        <begin position="1"/>
        <end position="97"/>
    </location>
</feature>
<feature type="transmembrane region" description="Helical" evidence="1">
    <location>
        <begin position="1"/>
        <end position="21"/>
    </location>
</feature>
<feature type="transmembrane region" description="Helical" evidence="1">
    <location>
        <begin position="25"/>
        <end position="45"/>
    </location>
</feature>
<feature type="transmembrane region" description="Helical" evidence="1">
    <location>
        <begin position="57"/>
        <end position="77"/>
    </location>
</feature>
<comment type="function">
    <text evidence="1">NDH-1 shuttles electrons from NADH, via FMN and iron-sulfur (Fe-S) centers, to quinones in the respiratory chain. The immediate electron acceptor for the enzyme in this species is believed to be a menaquinone. Couples the redox reaction to proton translocation (for every two electrons transferred, four hydrogen ions are translocated across the cytoplasmic membrane), and thus conserves the redox energy in a proton gradient.</text>
</comment>
<comment type="catalytic activity">
    <reaction evidence="1">
        <text>a quinone + NADH + 5 H(+)(in) = a quinol + NAD(+) + 4 H(+)(out)</text>
        <dbReference type="Rhea" id="RHEA:57888"/>
        <dbReference type="ChEBI" id="CHEBI:15378"/>
        <dbReference type="ChEBI" id="CHEBI:24646"/>
        <dbReference type="ChEBI" id="CHEBI:57540"/>
        <dbReference type="ChEBI" id="CHEBI:57945"/>
        <dbReference type="ChEBI" id="CHEBI:132124"/>
    </reaction>
</comment>
<comment type="subunit">
    <text evidence="1">NDH-1 is composed of 14 different subunits. Subunits NuoA, H, J, K, L, M, N constitute the membrane sector of the complex.</text>
</comment>
<comment type="subcellular location">
    <subcellularLocation>
        <location evidence="1">Cell inner membrane</location>
        <topology evidence="1">Multi-pass membrane protein</topology>
    </subcellularLocation>
</comment>
<comment type="similarity">
    <text evidence="1">Belongs to the complex I subunit 4L family.</text>
</comment>
<evidence type="ECO:0000255" key="1">
    <source>
        <dbReference type="HAMAP-Rule" id="MF_01456"/>
    </source>
</evidence>
<keyword id="KW-0997">Cell inner membrane</keyword>
<keyword id="KW-1003">Cell membrane</keyword>
<keyword id="KW-0472">Membrane</keyword>
<keyword id="KW-0520">NAD</keyword>
<keyword id="KW-0874">Quinone</keyword>
<keyword id="KW-1185">Reference proteome</keyword>
<keyword id="KW-1278">Translocase</keyword>
<keyword id="KW-0812">Transmembrane</keyword>
<keyword id="KW-1133">Transmembrane helix</keyword>
<keyword id="KW-0813">Transport</keyword>
<accession>Q11VC2</accession>
<gene>
    <name evidence="1" type="primary">nuoK</name>
    <name type="ordered locus">CHU_1372</name>
</gene>
<name>NUOK_CYTH3</name>
<dbReference type="EC" id="7.1.1.-" evidence="1"/>
<dbReference type="EMBL" id="CP000383">
    <property type="protein sequence ID" value="ABG58644.1"/>
    <property type="molecule type" value="Genomic_DNA"/>
</dbReference>
<dbReference type="RefSeq" id="WP_011584759.1">
    <property type="nucleotide sequence ID" value="NC_008255.1"/>
</dbReference>
<dbReference type="SMR" id="Q11VC2"/>
<dbReference type="STRING" id="269798.CHU_1372"/>
<dbReference type="KEGG" id="chu:CHU_1372"/>
<dbReference type="eggNOG" id="COG0713">
    <property type="taxonomic scope" value="Bacteria"/>
</dbReference>
<dbReference type="HOGENOM" id="CLU_144724_0_0_10"/>
<dbReference type="OrthoDB" id="9810120at2"/>
<dbReference type="Proteomes" id="UP000001822">
    <property type="component" value="Chromosome"/>
</dbReference>
<dbReference type="GO" id="GO:0030964">
    <property type="term" value="C:NADH dehydrogenase complex"/>
    <property type="evidence" value="ECO:0007669"/>
    <property type="project" value="TreeGrafter"/>
</dbReference>
<dbReference type="GO" id="GO:0005886">
    <property type="term" value="C:plasma membrane"/>
    <property type="evidence" value="ECO:0007669"/>
    <property type="project" value="UniProtKB-SubCell"/>
</dbReference>
<dbReference type="GO" id="GO:0050136">
    <property type="term" value="F:NADH:ubiquinone reductase (non-electrogenic) activity"/>
    <property type="evidence" value="ECO:0007669"/>
    <property type="project" value="UniProtKB-UniRule"/>
</dbReference>
<dbReference type="GO" id="GO:0048038">
    <property type="term" value="F:quinone binding"/>
    <property type="evidence" value="ECO:0007669"/>
    <property type="project" value="UniProtKB-KW"/>
</dbReference>
<dbReference type="GO" id="GO:0042773">
    <property type="term" value="P:ATP synthesis coupled electron transport"/>
    <property type="evidence" value="ECO:0007669"/>
    <property type="project" value="InterPro"/>
</dbReference>
<dbReference type="FunFam" id="1.10.287.3510:FF:000001">
    <property type="entry name" value="NADH-quinone oxidoreductase subunit K"/>
    <property type="match status" value="1"/>
</dbReference>
<dbReference type="Gene3D" id="1.10.287.3510">
    <property type="match status" value="1"/>
</dbReference>
<dbReference type="HAMAP" id="MF_01456">
    <property type="entry name" value="NDH1_NuoK"/>
    <property type="match status" value="1"/>
</dbReference>
<dbReference type="InterPro" id="IPR001133">
    <property type="entry name" value="NADH_UbQ_OxRdtase_chain4L/K"/>
</dbReference>
<dbReference type="InterPro" id="IPR039428">
    <property type="entry name" value="NUOK/Mnh_C1-like"/>
</dbReference>
<dbReference type="NCBIfam" id="NF004320">
    <property type="entry name" value="PRK05715.1-2"/>
    <property type="match status" value="1"/>
</dbReference>
<dbReference type="NCBIfam" id="NF004321">
    <property type="entry name" value="PRK05715.1-3"/>
    <property type="match status" value="1"/>
</dbReference>
<dbReference type="NCBIfam" id="NF004323">
    <property type="entry name" value="PRK05715.1-5"/>
    <property type="match status" value="1"/>
</dbReference>
<dbReference type="PANTHER" id="PTHR11434:SF21">
    <property type="entry name" value="NADH DEHYDROGENASE SUBUNIT 4L-RELATED"/>
    <property type="match status" value="1"/>
</dbReference>
<dbReference type="PANTHER" id="PTHR11434">
    <property type="entry name" value="NADH-UBIQUINONE OXIDOREDUCTASE SUBUNIT ND4L"/>
    <property type="match status" value="1"/>
</dbReference>
<dbReference type="Pfam" id="PF00420">
    <property type="entry name" value="Oxidored_q2"/>
    <property type="match status" value="1"/>
</dbReference>
<sequence length="97" mass="10996">MSEYLILCSILFSLGAFGVLYRRNILVMFMCIELMLNSVNLLMVYFSALHNDQSGQVFVFFIMAVAAAEITIGLAILVMIFRHLGSINIDSLKKLKW</sequence>